<evidence type="ECO:0000255" key="1">
    <source>
        <dbReference type="HAMAP-Rule" id="MF_00141"/>
    </source>
</evidence>
<evidence type="ECO:0000305" key="2"/>
<gene>
    <name evidence="1" type="primary">efp</name>
    <name type="ordered locus">CTC_01591</name>
</gene>
<name>EFP_CLOTE</name>
<reference key="1">
    <citation type="journal article" date="2003" name="Proc. Natl. Acad. Sci. U.S.A.">
        <title>The genome sequence of Clostridium tetani, the causative agent of tetanus disease.</title>
        <authorList>
            <person name="Brueggemann H."/>
            <person name="Baeumer S."/>
            <person name="Fricke W.F."/>
            <person name="Wiezer A."/>
            <person name="Liesegang H."/>
            <person name="Decker I."/>
            <person name="Herzberg C."/>
            <person name="Martinez-Arias R."/>
            <person name="Merkl R."/>
            <person name="Henne A."/>
            <person name="Gottschalk G."/>
        </authorList>
    </citation>
    <scope>NUCLEOTIDE SEQUENCE [LARGE SCALE GENOMIC DNA]</scope>
    <source>
        <strain>Massachusetts / E88</strain>
    </source>
</reference>
<proteinExistence type="inferred from homology"/>
<organism>
    <name type="scientific">Clostridium tetani (strain Massachusetts / E88)</name>
    <dbReference type="NCBI Taxonomy" id="212717"/>
    <lineage>
        <taxon>Bacteria</taxon>
        <taxon>Bacillati</taxon>
        <taxon>Bacillota</taxon>
        <taxon>Clostridia</taxon>
        <taxon>Eubacteriales</taxon>
        <taxon>Clostridiaceae</taxon>
        <taxon>Clostridium</taxon>
    </lineage>
</organism>
<sequence length="185" mass="20933">MISAGDLRKGNTFELDGQVYTVVDFLHVKPGKGAAFVRTKLRNVLNGGLKETTFNPTEKFQEAVIERKEMQYLYTDGELYYFMDQQTFEQIPLNFEQVEGAIKFLKENMFAIIKFYKGEAFSVEAPNFVELQITHTDPGAKGNTATNVMKPATVETGAVVHVPLFINEGDSIRIDTRTGEYMERV</sequence>
<accession>Q894F6</accession>
<comment type="function">
    <text evidence="1">Involved in peptide bond synthesis. Stimulates efficient translation and peptide-bond synthesis on native or reconstituted 70S ribosomes in vitro. Probably functions indirectly by altering the affinity of the ribosome for aminoacyl-tRNA, thus increasing their reactivity as acceptors for peptidyl transferase.</text>
</comment>
<comment type="pathway">
    <text evidence="1">Protein biosynthesis; polypeptide chain elongation.</text>
</comment>
<comment type="subcellular location">
    <subcellularLocation>
        <location evidence="1">Cytoplasm</location>
    </subcellularLocation>
</comment>
<comment type="similarity">
    <text evidence="1">Belongs to the elongation factor P family.</text>
</comment>
<comment type="sequence caution" evidence="2">
    <conflict type="erroneous initiation">
        <sequence resource="EMBL-CDS" id="AAO36136"/>
    </conflict>
</comment>
<keyword id="KW-0963">Cytoplasm</keyword>
<keyword id="KW-0251">Elongation factor</keyword>
<keyword id="KW-0648">Protein biosynthesis</keyword>
<keyword id="KW-1185">Reference proteome</keyword>
<protein>
    <recommendedName>
        <fullName evidence="1">Elongation factor P</fullName>
        <shortName evidence="1">EF-P</shortName>
    </recommendedName>
</protein>
<dbReference type="EMBL" id="AE015927">
    <property type="protein sequence ID" value="AAO36136.1"/>
    <property type="status" value="ALT_INIT"/>
    <property type="molecule type" value="Genomic_DNA"/>
</dbReference>
<dbReference type="RefSeq" id="WP_011099796.1">
    <property type="nucleotide sequence ID" value="NC_004557.1"/>
</dbReference>
<dbReference type="SMR" id="Q894F6"/>
<dbReference type="STRING" id="212717.CTC_01591"/>
<dbReference type="GeneID" id="24253151"/>
<dbReference type="KEGG" id="ctc:CTC_01591"/>
<dbReference type="HOGENOM" id="CLU_074944_0_1_9"/>
<dbReference type="OrthoDB" id="9801844at2"/>
<dbReference type="UniPathway" id="UPA00345"/>
<dbReference type="Proteomes" id="UP000001412">
    <property type="component" value="Chromosome"/>
</dbReference>
<dbReference type="GO" id="GO:0005737">
    <property type="term" value="C:cytoplasm"/>
    <property type="evidence" value="ECO:0007669"/>
    <property type="project" value="UniProtKB-SubCell"/>
</dbReference>
<dbReference type="GO" id="GO:0003746">
    <property type="term" value="F:translation elongation factor activity"/>
    <property type="evidence" value="ECO:0007669"/>
    <property type="project" value="UniProtKB-UniRule"/>
</dbReference>
<dbReference type="GO" id="GO:0043043">
    <property type="term" value="P:peptide biosynthetic process"/>
    <property type="evidence" value="ECO:0007669"/>
    <property type="project" value="InterPro"/>
</dbReference>
<dbReference type="CDD" id="cd04470">
    <property type="entry name" value="S1_EF-P_repeat_1"/>
    <property type="match status" value="1"/>
</dbReference>
<dbReference type="CDD" id="cd05794">
    <property type="entry name" value="S1_EF-P_repeat_2"/>
    <property type="match status" value="1"/>
</dbReference>
<dbReference type="FunFam" id="2.30.30.30:FF:000003">
    <property type="entry name" value="Elongation factor P"/>
    <property type="match status" value="1"/>
</dbReference>
<dbReference type="FunFam" id="2.40.50.140:FF:000004">
    <property type="entry name" value="Elongation factor P"/>
    <property type="match status" value="1"/>
</dbReference>
<dbReference type="FunFam" id="2.40.50.140:FF:000009">
    <property type="entry name" value="Elongation factor P"/>
    <property type="match status" value="1"/>
</dbReference>
<dbReference type="Gene3D" id="2.30.30.30">
    <property type="match status" value="1"/>
</dbReference>
<dbReference type="Gene3D" id="2.40.50.140">
    <property type="entry name" value="Nucleic acid-binding proteins"/>
    <property type="match status" value="2"/>
</dbReference>
<dbReference type="HAMAP" id="MF_00141">
    <property type="entry name" value="EF_P"/>
    <property type="match status" value="1"/>
</dbReference>
<dbReference type="InterPro" id="IPR015365">
    <property type="entry name" value="Elong-fact-P_C"/>
</dbReference>
<dbReference type="InterPro" id="IPR012340">
    <property type="entry name" value="NA-bd_OB-fold"/>
</dbReference>
<dbReference type="InterPro" id="IPR014722">
    <property type="entry name" value="Rib_uL2_dom2"/>
</dbReference>
<dbReference type="InterPro" id="IPR020599">
    <property type="entry name" value="Transl_elong_fac_P/YeiP"/>
</dbReference>
<dbReference type="InterPro" id="IPR013185">
    <property type="entry name" value="Transl_elong_KOW-like"/>
</dbReference>
<dbReference type="InterPro" id="IPR001059">
    <property type="entry name" value="Transl_elong_P/YeiP_cen"/>
</dbReference>
<dbReference type="InterPro" id="IPR013852">
    <property type="entry name" value="Transl_elong_P/YeiP_CS"/>
</dbReference>
<dbReference type="InterPro" id="IPR011768">
    <property type="entry name" value="Transl_elongation_fac_P"/>
</dbReference>
<dbReference type="InterPro" id="IPR008991">
    <property type="entry name" value="Translation_prot_SH3-like_sf"/>
</dbReference>
<dbReference type="NCBIfam" id="TIGR00038">
    <property type="entry name" value="efp"/>
    <property type="match status" value="1"/>
</dbReference>
<dbReference type="NCBIfam" id="NF001810">
    <property type="entry name" value="PRK00529.1"/>
    <property type="match status" value="1"/>
</dbReference>
<dbReference type="PANTHER" id="PTHR30053">
    <property type="entry name" value="ELONGATION FACTOR P"/>
    <property type="match status" value="1"/>
</dbReference>
<dbReference type="PANTHER" id="PTHR30053:SF12">
    <property type="entry name" value="ELONGATION FACTOR P (EF-P) FAMILY PROTEIN"/>
    <property type="match status" value="1"/>
</dbReference>
<dbReference type="Pfam" id="PF01132">
    <property type="entry name" value="EFP"/>
    <property type="match status" value="1"/>
</dbReference>
<dbReference type="Pfam" id="PF08207">
    <property type="entry name" value="EFP_N"/>
    <property type="match status" value="1"/>
</dbReference>
<dbReference type="Pfam" id="PF09285">
    <property type="entry name" value="Elong-fact-P_C"/>
    <property type="match status" value="1"/>
</dbReference>
<dbReference type="PIRSF" id="PIRSF005901">
    <property type="entry name" value="EF-P"/>
    <property type="match status" value="1"/>
</dbReference>
<dbReference type="SMART" id="SM01185">
    <property type="entry name" value="EFP"/>
    <property type="match status" value="1"/>
</dbReference>
<dbReference type="SMART" id="SM00841">
    <property type="entry name" value="Elong-fact-P_C"/>
    <property type="match status" value="1"/>
</dbReference>
<dbReference type="SUPFAM" id="SSF50249">
    <property type="entry name" value="Nucleic acid-binding proteins"/>
    <property type="match status" value="2"/>
</dbReference>
<dbReference type="SUPFAM" id="SSF50104">
    <property type="entry name" value="Translation proteins SH3-like domain"/>
    <property type="match status" value="1"/>
</dbReference>
<dbReference type="PROSITE" id="PS01275">
    <property type="entry name" value="EFP"/>
    <property type="match status" value="1"/>
</dbReference>
<feature type="chain" id="PRO_0000094237" description="Elongation factor P">
    <location>
        <begin position="1"/>
        <end position="185"/>
    </location>
</feature>